<organism>
    <name type="scientific">Shigella boydii serotype 18 (strain CDC 3083-94 / BS512)</name>
    <dbReference type="NCBI Taxonomy" id="344609"/>
    <lineage>
        <taxon>Bacteria</taxon>
        <taxon>Pseudomonadati</taxon>
        <taxon>Pseudomonadota</taxon>
        <taxon>Gammaproteobacteria</taxon>
        <taxon>Enterobacterales</taxon>
        <taxon>Enterobacteriaceae</taxon>
        <taxon>Shigella</taxon>
    </lineage>
</organism>
<sequence>MAAKIRRDDEVIVLTGKDKGKRGKVKNVLSSGKVIVEGINLVKKHQKPVPALNQPGGIVEKEAAIQVSNVAIFNAATGKADRVGFRFEDGKKVRFFKSNSETIK</sequence>
<protein>
    <recommendedName>
        <fullName evidence="1">Large ribosomal subunit protein uL24</fullName>
    </recommendedName>
    <alternativeName>
        <fullName evidence="2">50S ribosomal protein L24</fullName>
    </alternativeName>
</protein>
<gene>
    <name evidence="1" type="primary">rplX</name>
    <name type="ordered locus">SbBS512_E3694</name>
</gene>
<dbReference type="EMBL" id="CP001063">
    <property type="protein sequence ID" value="ACD09998.1"/>
    <property type="molecule type" value="Genomic_DNA"/>
</dbReference>
<dbReference type="RefSeq" id="WP_000729185.1">
    <property type="nucleotide sequence ID" value="NC_010658.1"/>
</dbReference>
<dbReference type="SMR" id="B2U2S7"/>
<dbReference type="STRING" id="344609.SbBS512_E3694"/>
<dbReference type="GeneID" id="93778678"/>
<dbReference type="KEGG" id="sbc:SbBS512_E3694"/>
<dbReference type="HOGENOM" id="CLU_093315_2_2_6"/>
<dbReference type="Proteomes" id="UP000001030">
    <property type="component" value="Chromosome"/>
</dbReference>
<dbReference type="GO" id="GO:0005829">
    <property type="term" value="C:cytosol"/>
    <property type="evidence" value="ECO:0007669"/>
    <property type="project" value="UniProtKB-ARBA"/>
</dbReference>
<dbReference type="GO" id="GO:1990904">
    <property type="term" value="C:ribonucleoprotein complex"/>
    <property type="evidence" value="ECO:0007669"/>
    <property type="project" value="UniProtKB-KW"/>
</dbReference>
<dbReference type="GO" id="GO:0005840">
    <property type="term" value="C:ribosome"/>
    <property type="evidence" value="ECO:0007669"/>
    <property type="project" value="UniProtKB-KW"/>
</dbReference>
<dbReference type="GO" id="GO:0019843">
    <property type="term" value="F:rRNA binding"/>
    <property type="evidence" value="ECO:0007669"/>
    <property type="project" value="UniProtKB-UniRule"/>
</dbReference>
<dbReference type="GO" id="GO:0003735">
    <property type="term" value="F:structural constituent of ribosome"/>
    <property type="evidence" value="ECO:0007669"/>
    <property type="project" value="InterPro"/>
</dbReference>
<dbReference type="GO" id="GO:0006412">
    <property type="term" value="P:translation"/>
    <property type="evidence" value="ECO:0007669"/>
    <property type="project" value="UniProtKB-UniRule"/>
</dbReference>
<dbReference type="CDD" id="cd06089">
    <property type="entry name" value="KOW_RPL26"/>
    <property type="match status" value="1"/>
</dbReference>
<dbReference type="FunFam" id="2.30.30.30:FF:000004">
    <property type="entry name" value="50S ribosomal protein L24"/>
    <property type="match status" value="1"/>
</dbReference>
<dbReference type="Gene3D" id="2.30.30.30">
    <property type="match status" value="1"/>
</dbReference>
<dbReference type="HAMAP" id="MF_01326_B">
    <property type="entry name" value="Ribosomal_uL24_B"/>
    <property type="match status" value="1"/>
</dbReference>
<dbReference type="InterPro" id="IPR005824">
    <property type="entry name" value="KOW"/>
</dbReference>
<dbReference type="InterPro" id="IPR014722">
    <property type="entry name" value="Rib_uL2_dom2"/>
</dbReference>
<dbReference type="InterPro" id="IPR003256">
    <property type="entry name" value="Ribosomal_uL24"/>
</dbReference>
<dbReference type="InterPro" id="IPR005825">
    <property type="entry name" value="Ribosomal_uL24_CS"/>
</dbReference>
<dbReference type="InterPro" id="IPR041988">
    <property type="entry name" value="Ribosomal_uL24_KOW"/>
</dbReference>
<dbReference type="InterPro" id="IPR008991">
    <property type="entry name" value="Translation_prot_SH3-like_sf"/>
</dbReference>
<dbReference type="NCBIfam" id="TIGR01079">
    <property type="entry name" value="rplX_bact"/>
    <property type="match status" value="1"/>
</dbReference>
<dbReference type="PANTHER" id="PTHR12903">
    <property type="entry name" value="MITOCHONDRIAL RIBOSOMAL PROTEIN L24"/>
    <property type="match status" value="1"/>
</dbReference>
<dbReference type="Pfam" id="PF00467">
    <property type="entry name" value="KOW"/>
    <property type="match status" value="1"/>
</dbReference>
<dbReference type="Pfam" id="PF17136">
    <property type="entry name" value="ribosomal_L24"/>
    <property type="match status" value="1"/>
</dbReference>
<dbReference type="SMART" id="SM00739">
    <property type="entry name" value="KOW"/>
    <property type="match status" value="1"/>
</dbReference>
<dbReference type="SUPFAM" id="SSF50104">
    <property type="entry name" value="Translation proteins SH3-like domain"/>
    <property type="match status" value="1"/>
</dbReference>
<dbReference type="PROSITE" id="PS01108">
    <property type="entry name" value="RIBOSOMAL_L24"/>
    <property type="match status" value="1"/>
</dbReference>
<reference key="1">
    <citation type="submission" date="2008-05" db="EMBL/GenBank/DDBJ databases">
        <title>Complete sequence of Shigella boydii serotype 18 strain BS512.</title>
        <authorList>
            <person name="Rasko D.A."/>
            <person name="Rosovitz M."/>
            <person name="Maurelli A.T."/>
            <person name="Myers G."/>
            <person name="Seshadri R."/>
            <person name="Cer R."/>
            <person name="Jiang L."/>
            <person name="Ravel J."/>
            <person name="Sebastian Y."/>
        </authorList>
    </citation>
    <scope>NUCLEOTIDE SEQUENCE [LARGE SCALE GENOMIC DNA]</scope>
    <source>
        <strain>CDC 3083-94 / BS512</strain>
    </source>
</reference>
<evidence type="ECO:0000255" key="1">
    <source>
        <dbReference type="HAMAP-Rule" id="MF_01326"/>
    </source>
</evidence>
<evidence type="ECO:0000305" key="2"/>
<name>RL24_SHIB3</name>
<keyword id="KW-1185">Reference proteome</keyword>
<keyword id="KW-0687">Ribonucleoprotein</keyword>
<keyword id="KW-0689">Ribosomal protein</keyword>
<keyword id="KW-0694">RNA-binding</keyword>
<keyword id="KW-0699">rRNA-binding</keyword>
<feature type="chain" id="PRO_1000142041" description="Large ribosomal subunit protein uL24">
    <location>
        <begin position="1"/>
        <end position="104"/>
    </location>
</feature>
<comment type="function">
    <text evidence="1">One of two assembly initiator proteins, it binds directly to the 5'-end of the 23S rRNA, where it nucleates assembly of the 50S subunit.</text>
</comment>
<comment type="function">
    <text evidence="1">One of the proteins that surrounds the polypeptide exit tunnel on the outside of the subunit.</text>
</comment>
<comment type="subunit">
    <text evidence="1">Part of the 50S ribosomal subunit.</text>
</comment>
<comment type="similarity">
    <text evidence="1">Belongs to the universal ribosomal protein uL24 family.</text>
</comment>
<accession>B2U2S7</accession>
<proteinExistence type="inferred from homology"/>